<comment type="function">
    <text evidence="4">Snake venom phospholipase A2 (PLA2) that acts in vivo as an anti-thrombotic agent. Inhibits platelet aggregation induced by ADP, arachidonic acid, and thrombin. PLA2 catalyzes the calcium-dependent hydrolysis of the 2-acyl groups in 3-sn-phosphoglycerides.</text>
</comment>
<comment type="catalytic activity">
    <reaction evidence="2 3">
        <text>a 1,2-diacyl-sn-glycero-3-phosphocholine + H2O = a 1-acyl-sn-glycero-3-phosphocholine + a fatty acid + H(+)</text>
        <dbReference type="Rhea" id="RHEA:15801"/>
        <dbReference type="ChEBI" id="CHEBI:15377"/>
        <dbReference type="ChEBI" id="CHEBI:15378"/>
        <dbReference type="ChEBI" id="CHEBI:28868"/>
        <dbReference type="ChEBI" id="CHEBI:57643"/>
        <dbReference type="ChEBI" id="CHEBI:58168"/>
        <dbReference type="EC" id="3.1.1.4"/>
    </reaction>
</comment>
<comment type="cofactor">
    <cofactor evidence="10 11">
        <name>Ca(2+)</name>
        <dbReference type="ChEBI" id="CHEBI:29108"/>
    </cofactor>
    <text evidence="10 11">Binds 1 Ca(2+) ion.</text>
</comment>
<comment type="subunit">
    <text>Monomer.</text>
</comment>
<comment type="subcellular location">
    <subcellularLocation>
        <location evidence="5">Secreted</location>
    </subcellularLocation>
</comment>
<comment type="tissue specificity">
    <text evidence="9">Expressed by the venom gland.</text>
</comment>
<comment type="mass spectrometry"/>
<comment type="pharmaceutical">
    <text>The venom of this snake has been orally administered to patients in China for about 2000 years, mostly to treat thrombotic diseases.</text>
</comment>
<comment type="similarity">
    <text evidence="8">Belongs to the phospholipase A2 family. Group II subfamily. D49 sub-subfamily.</text>
</comment>
<reference key="1">
    <citation type="journal article" date="1987" name="Toxicon">
        <title>Characterization of the structure and function of three phospholipases A2 from the venom of Agkistrodon halys pallas.</title>
        <authorList>
            <person name="Chen Y.-C."/>
            <person name="Maraganore J.M."/>
            <person name="Reardon I."/>
            <person name="Heinrikson R.L."/>
        </authorList>
    </citation>
    <scope>PROTEIN SEQUENCE</scope>
    <scope>SUBCELLULAR LOCATION</scope>
    <source>
        <tissue>Venom</tissue>
    </source>
</reference>
<reference key="2">
    <citation type="journal article" date="2008" name="Toxicon">
        <title>Bioassay-directed purification of an acidic phospholipase A(2) from Agkistrodon halys pallas venom.</title>
        <authorList>
            <person name="Wang Y."/>
            <person name="Cui G."/>
            <person name="Zhao M."/>
            <person name="Yang J."/>
            <person name="Wang C."/>
            <person name="Giese R.W."/>
            <person name="Peng S."/>
        </authorList>
    </citation>
    <scope>PROTEIN SEQUENCE OF 1-114</scope>
    <scope>FUNCTION</scope>
    <scope>BIOASSAY</scope>
    <scope>MASS SPECTROMETRY</scope>
    <source>
        <tissue>Venom</tissue>
    </source>
</reference>
<reference evidence="13" key="3">
    <citation type="journal article" date="1996" name="J. Mol. Biol.">
        <title>Crystal structure of an acidic phospholipase A2 from the venom of Agkistrodon halys pallas at 2.0-A resolution.</title>
        <authorList>
            <person name="Wang X.-Q."/>
            <person name="Yang J."/>
            <person name="Gui L.-L."/>
            <person name="Lin Z.-J."/>
            <person name="Chen Y.-C."/>
            <person name="Zhou Y.-C."/>
        </authorList>
    </citation>
    <scope>X-RAY CRYSTALLOGRAPHY (2.0 ANGSTROMS) IN COMPLEX WITH CALCIUM ION</scope>
    <scope>COFACTOR</scope>
    <scope>DISULFIDE BONDS</scope>
    <source>
        <tissue>Venom</tissue>
    </source>
</reference>
<reference evidence="12" key="4">
    <citation type="journal article" date="1998" name="Toxicon">
        <title>Structure of a snake venom phospholipase A2 modified by p-bromo-phenacyl-bromide.</title>
        <authorList>
            <person name="Zhao H."/>
            <person name="Tang L."/>
            <person name="Wang X."/>
            <person name="Zhou Y."/>
            <person name="Lin Z."/>
        </authorList>
    </citation>
    <scope>X-RAY CRYSTALLOGRAPHY (2.0 ANGSTROMS) IN COMPLEX WITH CALCIUM ION</scope>
    <scope>COFACTOR</scope>
    <scope>DISULFIDE BONDS</scope>
    <source>
        <tissue>Venom</tissue>
    </source>
</reference>
<accession>P14418</accession>
<feature type="chain" id="PRO_0000161597" description="Acidic phospholipase A2" evidence="5">
    <location>
        <begin position="1"/>
        <end position="124"/>
    </location>
</feature>
<feature type="active site" evidence="1">
    <location>
        <position position="47"/>
    </location>
</feature>
<feature type="active site" evidence="1">
    <location>
        <position position="89"/>
    </location>
</feature>
<feature type="binding site" evidence="6 7 14 15">
    <location>
        <position position="27"/>
    </location>
    <ligand>
        <name>Ca(2+)</name>
        <dbReference type="ChEBI" id="CHEBI:29108"/>
    </ligand>
</feature>
<feature type="binding site" evidence="6 7 14 15">
    <location>
        <position position="29"/>
    </location>
    <ligand>
        <name>Ca(2+)</name>
        <dbReference type="ChEBI" id="CHEBI:29108"/>
    </ligand>
</feature>
<feature type="binding site" evidence="6 7 14 15">
    <location>
        <position position="31"/>
    </location>
    <ligand>
        <name>Ca(2+)</name>
        <dbReference type="ChEBI" id="CHEBI:29108"/>
    </ligand>
</feature>
<feature type="binding site" evidence="6 7 14 15">
    <location>
        <position position="48"/>
    </location>
    <ligand>
        <name>Ca(2+)</name>
        <dbReference type="ChEBI" id="CHEBI:29108"/>
    </ligand>
</feature>
<feature type="disulfide bond" evidence="6 7 14 15">
    <location>
        <begin position="26"/>
        <end position="116"/>
    </location>
</feature>
<feature type="disulfide bond" evidence="6 7 14 15">
    <location>
        <begin position="28"/>
        <end position="44"/>
    </location>
</feature>
<feature type="disulfide bond" evidence="6 7 14 15">
    <location>
        <begin position="43"/>
        <end position="95"/>
    </location>
</feature>
<feature type="disulfide bond" evidence="6 7 14 15">
    <location>
        <begin position="49"/>
        <end position="124"/>
    </location>
</feature>
<feature type="disulfide bond" evidence="6 7 14 15">
    <location>
        <begin position="50"/>
        <end position="88"/>
    </location>
</feature>
<feature type="disulfide bond" evidence="6 7 14 15">
    <location>
        <begin position="57"/>
        <end position="81"/>
    </location>
</feature>
<feature type="disulfide bond" evidence="6 7 14 15">
    <location>
        <begin position="75"/>
        <end position="86"/>
    </location>
</feature>
<feature type="sequence conflict" description="In Ref. 2; AA sequence." evidence="8" ref="2">
    <original>TL</original>
    <variation>NT</variation>
    <location>
        <begin position="101"/>
        <end position="102"/>
    </location>
</feature>
<feature type="helix" evidence="16">
    <location>
        <begin position="2"/>
        <end position="13"/>
    </location>
</feature>
<feature type="helix" evidence="16">
    <location>
        <begin position="17"/>
        <end position="20"/>
    </location>
</feature>
<feature type="strand" evidence="16">
    <location>
        <begin position="21"/>
        <end position="24"/>
    </location>
</feature>
<feature type="turn" evidence="16">
    <location>
        <begin position="25"/>
        <end position="27"/>
    </location>
</feature>
<feature type="strand" evidence="16">
    <location>
        <begin position="28"/>
        <end position="31"/>
    </location>
</feature>
<feature type="helix" evidence="16">
    <location>
        <begin position="39"/>
        <end position="52"/>
    </location>
</feature>
<feature type="turn" evidence="16">
    <location>
        <begin position="59"/>
        <end position="61"/>
    </location>
</feature>
<feature type="strand" evidence="16">
    <location>
        <begin position="65"/>
        <end position="69"/>
    </location>
</feature>
<feature type="strand" evidence="16">
    <location>
        <begin position="72"/>
        <end position="78"/>
    </location>
</feature>
<feature type="helix" evidence="16">
    <location>
        <begin position="80"/>
        <end position="98"/>
    </location>
</feature>
<feature type="helix" evidence="16">
    <location>
        <begin position="99"/>
        <end position="102"/>
    </location>
</feature>
<feature type="helix" evidence="16">
    <location>
        <begin position="105"/>
        <end position="108"/>
    </location>
</feature>
<feature type="helix" evidence="16">
    <location>
        <begin position="113"/>
        <end position="115"/>
    </location>
</feature>
<feature type="helix" evidence="16">
    <location>
        <begin position="118"/>
        <end position="120"/>
    </location>
</feature>
<evidence type="ECO:0000250" key="1">
    <source>
        <dbReference type="UniProtKB" id="P06859"/>
    </source>
</evidence>
<evidence type="ECO:0000255" key="2">
    <source>
        <dbReference type="PROSITE-ProRule" id="PRU10035"/>
    </source>
</evidence>
<evidence type="ECO:0000255" key="3">
    <source>
        <dbReference type="PROSITE-ProRule" id="PRU10036"/>
    </source>
</evidence>
<evidence type="ECO:0000269" key="4">
    <source>
    </source>
</evidence>
<evidence type="ECO:0000269" key="5">
    <source>
    </source>
</evidence>
<evidence type="ECO:0000269" key="6">
    <source>
    </source>
</evidence>
<evidence type="ECO:0000269" key="7">
    <source>
    </source>
</evidence>
<evidence type="ECO:0000305" key="8"/>
<evidence type="ECO:0000305" key="9">
    <source>
    </source>
</evidence>
<evidence type="ECO:0000305" key="10">
    <source>
    </source>
</evidence>
<evidence type="ECO:0000305" key="11">
    <source>
    </source>
</evidence>
<evidence type="ECO:0000312" key="12">
    <source>
        <dbReference type="PDB" id="1BK9"/>
    </source>
</evidence>
<evidence type="ECO:0000312" key="13">
    <source>
        <dbReference type="PDB" id="1PSJ"/>
    </source>
</evidence>
<evidence type="ECO:0007744" key="14">
    <source>
        <dbReference type="PDB" id="1BK9"/>
    </source>
</evidence>
<evidence type="ECO:0007744" key="15">
    <source>
        <dbReference type="PDB" id="1PSJ"/>
    </source>
</evidence>
<evidence type="ECO:0007829" key="16">
    <source>
        <dbReference type="PDB" id="1BK9"/>
    </source>
</evidence>
<keyword id="KW-0002">3D-structure</keyword>
<keyword id="KW-1203">Blood coagulation cascade inhibiting toxin</keyword>
<keyword id="KW-0106">Calcium</keyword>
<keyword id="KW-0903">Direct protein sequencing</keyword>
<keyword id="KW-1015">Disulfide bond</keyword>
<keyword id="KW-1199">Hemostasis impairing toxin</keyword>
<keyword id="KW-0378">Hydrolase</keyword>
<keyword id="KW-0442">Lipid degradation</keyword>
<keyword id="KW-0443">Lipid metabolism</keyword>
<keyword id="KW-0479">Metal-binding</keyword>
<keyword id="KW-0582">Pharmaceutical</keyword>
<keyword id="KW-1201">Platelet aggregation inhibiting toxin</keyword>
<keyword id="KW-0964">Secreted</keyword>
<keyword id="KW-0800">Toxin</keyword>
<name>PA2A_GLOHA</name>
<proteinExistence type="evidence at protein level"/>
<protein>
    <recommendedName>
        <fullName>Acidic phospholipase A2</fullName>
        <shortName>svPLA2</shortName>
        <ecNumber>3.1.1.4</ecNumber>
    </recommendedName>
    <alternativeName>
        <fullName>APLA2</fullName>
    </alternativeName>
    <alternativeName>
        <fullName>Phosphatidylcholine 2-acylhydrolase</fullName>
    </alternativeName>
</protein>
<sequence>SLIQFETLIMKVAKKSGMFWYSNYGCYCGWGGQGRPQDATDRCCFVHDCCYGKVTGCDPKMDVYSFSEENGDIVCGGDDPCKKEICECDRAAAICFRDNLTLYNDKKYWAFGAKNCPQEESEPC</sequence>
<dbReference type="EC" id="3.1.1.4"/>
<dbReference type="PIR" id="A26535">
    <property type="entry name" value="A26535"/>
</dbReference>
<dbReference type="PDB" id="1BK9">
    <property type="method" value="X-ray"/>
    <property type="resolution" value="2.00 A"/>
    <property type="chains" value="A=1-124"/>
</dbReference>
<dbReference type="PDB" id="1PSJ">
    <property type="method" value="X-ray"/>
    <property type="resolution" value="2.00 A"/>
    <property type="chains" value="A=1-124"/>
</dbReference>
<dbReference type="PDBsum" id="1BK9"/>
<dbReference type="PDBsum" id="1PSJ"/>
<dbReference type="SMR" id="P14418"/>
<dbReference type="BRENDA" id="3.1.1.4">
    <property type="organism ID" value="195"/>
</dbReference>
<dbReference type="EvolutionaryTrace" id="P14418"/>
<dbReference type="GO" id="GO:0005576">
    <property type="term" value="C:extracellular region"/>
    <property type="evidence" value="ECO:0007669"/>
    <property type="project" value="UniProtKB-SubCell"/>
</dbReference>
<dbReference type="GO" id="GO:0005509">
    <property type="term" value="F:calcium ion binding"/>
    <property type="evidence" value="ECO:0007669"/>
    <property type="project" value="InterPro"/>
</dbReference>
<dbReference type="GO" id="GO:0047498">
    <property type="term" value="F:calcium-dependent phospholipase A2 activity"/>
    <property type="evidence" value="ECO:0007669"/>
    <property type="project" value="TreeGrafter"/>
</dbReference>
<dbReference type="GO" id="GO:0005543">
    <property type="term" value="F:phospholipid binding"/>
    <property type="evidence" value="ECO:0007669"/>
    <property type="project" value="TreeGrafter"/>
</dbReference>
<dbReference type="GO" id="GO:0090729">
    <property type="term" value="F:toxin activity"/>
    <property type="evidence" value="ECO:0007669"/>
    <property type="project" value="UniProtKB-KW"/>
</dbReference>
<dbReference type="GO" id="GO:0050482">
    <property type="term" value="P:arachidonate secretion"/>
    <property type="evidence" value="ECO:0007669"/>
    <property type="project" value="InterPro"/>
</dbReference>
<dbReference type="GO" id="GO:0016042">
    <property type="term" value="P:lipid catabolic process"/>
    <property type="evidence" value="ECO:0007669"/>
    <property type="project" value="UniProtKB-KW"/>
</dbReference>
<dbReference type="GO" id="GO:0042130">
    <property type="term" value="P:negative regulation of T cell proliferation"/>
    <property type="evidence" value="ECO:0007669"/>
    <property type="project" value="TreeGrafter"/>
</dbReference>
<dbReference type="GO" id="GO:0006644">
    <property type="term" value="P:phospholipid metabolic process"/>
    <property type="evidence" value="ECO:0007669"/>
    <property type="project" value="InterPro"/>
</dbReference>
<dbReference type="CDD" id="cd00125">
    <property type="entry name" value="PLA2c"/>
    <property type="match status" value="1"/>
</dbReference>
<dbReference type="FunFam" id="1.20.90.10:FF:000001">
    <property type="entry name" value="Basic phospholipase A2 homolog"/>
    <property type="match status" value="1"/>
</dbReference>
<dbReference type="Gene3D" id="1.20.90.10">
    <property type="entry name" value="Phospholipase A2 domain"/>
    <property type="match status" value="1"/>
</dbReference>
<dbReference type="InterPro" id="IPR001211">
    <property type="entry name" value="PLipase_A2"/>
</dbReference>
<dbReference type="InterPro" id="IPR033112">
    <property type="entry name" value="PLipase_A2_Asp_AS"/>
</dbReference>
<dbReference type="InterPro" id="IPR016090">
    <property type="entry name" value="PLipase_A2_dom"/>
</dbReference>
<dbReference type="InterPro" id="IPR036444">
    <property type="entry name" value="PLipase_A2_dom_sf"/>
</dbReference>
<dbReference type="InterPro" id="IPR033113">
    <property type="entry name" value="PLipase_A2_His_AS"/>
</dbReference>
<dbReference type="PANTHER" id="PTHR11716">
    <property type="entry name" value="PHOSPHOLIPASE A2 FAMILY MEMBER"/>
    <property type="match status" value="1"/>
</dbReference>
<dbReference type="PANTHER" id="PTHR11716:SF9">
    <property type="entry name" value="PHOSPHOLIPASE A2, MEMBRANE ASSOCIATED"/>
    <property type="match status" value="1"/>
</dbReference>
<dbReference type="Pfam" id="PF00068">
    <property type="entry name" value="Phospholip_A2_1"/>
    <property type="match status" value="1"/>
</dbReference>
<dbReference type="PRINTS" id="PR00389">
    <property type="entry name" value="PHPHLIPASEA2"/>
</dbReference>
<dbReference type="SMART" id="SM00085">
    <property type="entry name" value="PA2c"/>
    <property type="match status" value="1"/>
</dbReference>
<dbReference type="SUPFAM" id="SSF48619">
    <property type="entry name" value="Phospholipase A2, PLA2"/>
    <property type="match status" value="1"/>
</dbReference>
<dbReference type="PROSITE" id="PS00119">
    <property type="entry name" value="PA2_ASP"/>
    <property type="match status" value="1"/>
</dbReference>
<dbReference type="PROSITE" id="PS00118">
    <property type="entry name" value="PA2_HIS"/>
    <property type="match status" value="1"/>
</dbReference>
<organism>
    <name type="scientific">Gloydius halys</name>
    <name type="common">Chinese water mocassin</name>
    <name type="synonym">Agkistrodon halys</name>
    <dbReference type="NCBI Taxonomy" id="8714"/>
    <lineage>
        <taxon>Eukaryota</taxon>
        <taxon>Metazoa</taxon>
        <taxon>Chordata</taxon>
        <taxon>Craniata</taxon>
        <taxon>Vertebrata</taxon>
        <taxon>Euteleostomi</taxon>
        <taxon>Lepidosauria</taxon>
        <taxon>Squamata</taxon>
        <taxon>Bifurcata</taxon>
        <taxon>Unidentata</taxon>
        <taxon>Episquamata</taxon>
        <taxon>Toxicofera</taxon>
        <taxon>Serpentes</taxon>
        <taxon>Colubroidea</taxon>
        <taxon>Viperidae</taxon>
        <taxon>Crotalinae</taxon>
        <taxon>Gloydius</taxon>
    </lineage>
</organism>